<evidence type="ECO:0000255" key="1">
    <source>
        <dbReference type="HAMAP-Rule" id="MF_00095"/>
    </source>
</evidence>
<name>SFSA_CHLSY</name>
<comment type="similarity">
    <text evidence="1">Belongs to the SfsA family.</text>
</comment>
<reference key="1">
    <citation type="submission" date="2009-01" db="EMBL/GenBank/DDBJ databases">
        <title>Complete sequence of Chloroflexus sp. Y-400-fl.</title>
        <authorList>
            <consortium name="US DOE Joint Genome Institute"/>
            <person name="Lucas S."/>
            <person name="Copeland A."/>
            <person name="Lapidus A."/>
            <person name="Glavina del Rio T."/>
            <person name="Dalin E."/>
            <person name="Tice H."/>
            <person name="Bruce D."/>
            <person name="Goodwin L."/>
            <person name="Pitluck S."/>
            <person name="Sims D."/>
            <person name="Kiss H."/>
            <person name="Brettin T."/>
            <person name="Detter J.C."/>
            <person name="Han C."/>
            <person name="Larimer F."/>
            <person name="Land M."/>
            <person name="Hauser L."/>
            <person name="Kyrpides N."/>
            <person name="Ovchinnikova G."/>
            <person name="Bryant D.A."/>
            <person name="Richardson P."/>
        </authorList>
    </citation>
    <scope>NUCLEOTIDE SEQUENCE [LARGE SCALE GENOMIC DNA]</scope>
    <source>
        <strain>ATCC 29364 / DSM 637 / Y-400-fl</strain>
    </source>
</reference>
<dbReference type="EMBL" id="CP001364">
    <property type="protein sequence ID" value="ACM54929.1"/>
    <property type="molecule type" value="Genomic_DNA"/>
</dbReference>
<dbReference type="SMR" id="B9LD40"/>
<dbReference type="KEGG" id="chl:Chy400_3558"/>
<dbReference type="HOGENOM" id="CLU_052299_1_0_0"/>
<dbReference type="OrthoDB" id="9802365at2"/>
<dbReference type="GO" id="GO:0003677">
    <property type="term" value="F:DNA binding"/>
    <property type="evidence" value="ECO:0007669"/>
    <property type="project" value="InterPro"/>
</dbReference>
<dbReference type="CDD" id="cd22359">
    <property type="entry name" value="SfsA-like_bacterial"/>
    <property type="match status" value="1"/>
</dbReference>
<dbReference type="Gene3D" id="2.40.50.580">
    <property type="match status" value="1"/>
</dbReference>
<dbReference type="Gene3D" id="3.40.1350.60">
    <property type="match status" value="1"/>
</dbReference>
<dbReference type="HAMAP" id="MF_00095">
    <property type="entry name" value="SfsA"/>
    <property type="match status" value="1"/>
</dbReference>
<dbReference type="InterPro" id="IPR005224">
    <property type="entry name" value="SfsA"/>
</dbReference>
<dbReference type="InterPro" id="IPR040452">
    <property type="entry name" value="SfsA_C"/>
</dbReference>
<dbReference type="InterPro" id="IPR041465">
    <property type="entry name" value="SfsA_N"/>
</dbReference>
<dbReference type="NCBIfam" id="TIGR00230">
    <property type="entry name" value="sfsA"/>
    <property type="match status" value="1"/>
</dbReference>
<dbReference type="PANTHER" id="PTHR30545">
    <property type="entry name" value="SUGAR FERMENTATION STIMULATION PROTEIN A"/>
    <property type="match status" value="1"/>
</dbReference>
<dbReference type="PANTHER" id="PTHR30545:SF2">
    <property type="entry name" value="SUGAR FERMENTATION STIMULATION PROTEIN A"/>
    <property type="match status" value="1"/>
</dbReference>
<dbReference type="Pfam" id="PF03749">
    <property type="entry name" value="SfsA"/>
    <property type="match status" value="1"/>
</dbReference>
<dbReference type="Pfam" id="PF17746">
    <property type="entry name" value="SfsA_N"/>
    <property type="match status" value="1"/>
</dbReference>
<proteinExistence type="inferred from homology"/>
<accession>B9LD40</accession>
<protein>
    <recommendedName>
        <fullName evidence="1">Sugar fermentation stimulation protein homolog</fullName>
    </recommendedName>
</protein>
<gene>
    <name evidence="1" type="primary">sfsA</name>
    <name type="ordered locus">Chy400_3558</name>
</gene>
<feature type="chain" id="PRO_1000196962" description="Sugar fermentation stimulation protein homolog">
    <location>
        <begin position="1"/>
        <end position="259"/>
    </location>
</feature>
<organism>
    <name type="scientific">Chloroflexus aurantiacus (strain ATCC 29364 / DSM 637 / Y-400-fl)</name>
    <dbReference type="NCBI Taxonomy" id="480224"/>
    <lineage>
        <taxon>Bacteria</taxon>
        <taxon>Bacillati</taxon>
        <taxon>Chloroflexota</taxon>
        <taxon>Chloroflexia</taxon>
        <taxon>Chloroflexales</taxon>
        <taxon>Chloroflexineae</taxon>
        <taxon>Chloroflexaceae</taxon>
        <taxon>Chloroflexus</taxon>
    </lineage>
</organism>
<sequence length="259" mass="28068">MVTGHGTGHHGQSPVRVPLSSGAPLVEATFASRPSQFLVEAQMGGRMVRAHLADRGRLTDLLTPGARLLLASREEIGRKTAFQVVAVYQDGDLVSLDTQLPNRLVAAALSLGALPQFARYSRVQREVQLGPHRIDFRLSEGLDTCLLEVKSVTRLVDGIAVFPDAPTERGGRHLELLINAARNGQRAAVVFIIQRSRGCAFAPDVTVDPAFSRSLREARSVGVEIYAYRCPVDPSGITLGQEVPVFASFAAVPFELRQH</sequence>